<sequence length="303" mass="33500">MPEASSPRRTPQNVPYQDLPHLVNADGQYLFCRYWKPSGTPKALIFVSHGAGEHCGRYDELAQMLKRLDMLVFAHDHVGHGQSEGERMVVSDFQVFVRDLLQHVNTVQKDYPEVPVFLLGHSMGGAISILAAAERPTHFSGMILISPLILANPESASTLKVLAAKLLNFVLPNISLGRIDSSVLSRNKSEVDLYNSDPLICHAGVKVCFGIQLLNAVSRVERAMPRLTLPFLLLQGSADRLCDSKGAYLLMESSPSQDKTLKMYEGAYHVLHKELPEVTNSVLHEINTWVSHRIAVAGARCLP</sequence>
<organism>
    <name type="scientific">Rattus norvegicus</name>
    <name type="common">Rat</name>
    <dbReference type="NCBI Taxonomy" id="10116"/>
    <lineage>
        <taxon>Eukaryota</taxon>
        <taxon>Metazoa</taxon>
        <taxon>Chordata</taxon>
        <taxon>Craniata</taxon>
        <taxon>Vertebrata</taxon>
        <taxon>Euteleostomi</taxon>
        <taxon>Mammalia</taxon>
        <taxon>Eutheria</taxon>
        <taxon>Euarchontoglires</taxon>
        <taxon>Glires</taxon>
        <taxon>Rodentia</taxon>
        <taxon>Myomorpha</taxon>
        <taxon>Muroidea</taxon>
        <taxon>Muridae</taxon>
        <taxon>Murinae</taxon>
        <taxon>Rattus</taxon>
    </lineage>
</organism>
<evidence type="ECO:0000250" key="1"/>
<evidence type="ECO:0000250" key="2">
    <source>
        <dbReference type="UniProtKB" id="O35678"/>
    </source>
</evidence>
<evidence type="ECO:0000250" key="3">
    <source>
        <dbReference type="UniProtKB" id="Q99685"/>
    </source>
</evidence>
<evidence type="ECO:0000269" key="4">
    <source>
    </source>
</evidence>
<evidence type="ECO:0000269" key="5">
    <source>
    </source>
</evidence>
<evidence type="ECO:0000269" key="6">
    <source>
    </source>
</evidence>
<evidence type="ECO:0000305" key="7"/>
<evidence type="ECO:0000312" key="8">
    <source>
        <dbReference type="RGD" id="71039"/>
    </source>
</evidence>
<keyword id="KW-0963">Cytoplasm</keyword>
<keyword id="KW-0903">Direct protein sequencing</keyword>
<keyword id="KW-0275">Fatty acid biosynthesis</keyword>
<keyword id="KW-0276">Fatty acid metabolism</keyword>
<keyword id="KW-0378">Hydrolase</keyword>
<keyword id="KW-0444">Lipid biosynthesis</keyword>
<keyword id="KW-0442">Lipid degradation</keyword>
<keyword id="KW-0443">Lipid metabolism</keyword>
<keyword id="KW-0472">Membrane</keyword>
<keyword id="KW-0944">Nitration</keyword>
<keyword id="KW-0597">Phosphoprotein</keyword>
<keyword id="KW-1185">Reference proteome</keyword>
<keyword id="KW-0719">Serine esterase</keyword>
<proteinExistence type="evidence at protein level"/>
<protein>
    <recommendedName>
        <fullName evidence="7">Monoglyceride lipase</fullName>
        <shortName>MGL</shortName>
        <ecNumber evidence="5">3.1.1.23</ecNumber>
    </recommendedName>
    <alternativeName>
        <fullName>Monoacylglycerol lipase</fullName>
        <shortName>MAGL</shortName>
    </alternativeName>
</protein>
<accession>Q8R431</accession>
<accession>Q32PZ2</accession>
<name>MGLL_RAT</name>
<reference key="1">
    <citation type="journal article" date="2002" name="Proc. Natl. Acad. Sci. U.S.A.">
        <title>Brain monoglyceride lipase participating in endocannabinoid inactivation.</title>
        <authorList>
            <person name="Dinh T.P."/>
            <person name="Carpenter D."/>
            <person name="Leslie F.M."/>
            <person name="Freund T.F."/>
            <person name="Katona I."/>
            <person name="Sensi S.L."/>
            <person name="Kathuria S."/>
            <person name="Piomelli D."/>
        </authorList>
    </citation>
    <scope>NUCLEOTIDE SEQUENCE [MRNA]</scope>
    <scope>FUNCTION</scope>
    <scope>TISSUE SPECIFICITY</scope>
    <source>
        <strain>Sprague-Dawley</strain>
        <tissue>Brain</tissue>
    </source>
</reference>
<reference key="2">
    <citation type="journal article" date="2004" name="Genome Res.">
        <title>The status, quality, and expansion of the NIH full-length cDNA project: the Mammalian Gene Collection (MGC).</title>
        <authorList>
            <consortium name="The MGC Project Team"/>
        </authorList>
    </citation>
    <scope>NUCLEOTIDE SEQUENCE [LARGE SCALE MRNA]</scope>
    <source>
        <tissue>Placenta</tissue>
    </source>
</reference>
<reference key="3">
    <citation type="journal article" date="1997" name="J. Biol. Chem.">
        <title>cDNA cloning, tissue distribution, and identification of the catalytic triad of monoglyceride lipase. Evolutionary relationship to esterases, lysophospholipases, and haloperoxidases.</title>
        <authorList>
            <person name="Karlsson M."/>
            <person name="Contreras J.A."/>
            <person name="Hellman U."/>
            <person name="Tornqvist H."/>
            <person name="Holm C."/>
        </authorList>
    </citation>
    <scope>PROTEIN SEQUENCE OF 9-16; 34-41; 99-109; 179-183; 187-197; 227-240 AND 263-273</scope>
    <scope>TISSUE SPECIFICITY</scope>
</reference>
<reference key="4">
    <citation type="submission" date="2006-12" db="UniProtKB">
        <authorList>
            <person name="Lubec G."/>
            <person name="Afjehi-Sadat L."/>
        </authorList>
    </citation>
    <scope>PROTEIN SEQUENCE OF 227-240</scope>
    <scope>IDENTIFICATION BY MASS SPECTROMETRY</scope>
    <source>
        <strain>Sprague-Dawley</strain>
        <tissue>Spinal cord</tissue>
    </source>
</reference>
<reference key="5">
    <citation type="journal article" date="2007" name="Biochemistry">
        <title>Hydrolysis of prostaglandin glycerol esters by the endocannabinoid-hydrolyzing enzymes, monoacylglycerol lipase and fatty acid amide hydrolase.</title>
        <authorList>
            <person name="Vila A."/>
            <person name="Rosengarth A."/>
            <person name="Piomelli D."/>
            <person name="Cravatt B."/>
            <person name="Marnett L.J."/>
        </authorList>
    </citation>
    <scope>FUNCTION</scope>
    <scope>CATALYTIC ACTIVITY</scope>
    <scope>BIOPHYSICOCHEMICAL PROPERTIES</scope>
</reference>
<gene>
    <name evidence="8" type="primary">Mgll</name>
    <name type="synonym">Mgl2</name>
</gene>
<dbReference type="EC" id="3.1.1.23" evidence="5"/>
<dbReference type="EMBL" id="AY081195">
    <property type="protein sequence ID" value="AAL87453.1"/>
    <property type="molecule type" value="mRNA"/>
</dbReference>
<dbReference type="EMBL" id="BC107920">
    <property type="protein sequence ID" value="AAI07921.1"/>
    <property type="molecule type" value="mRNA"/>
</dbReference>
<dbReference type="RefSeq" id="NP_612511.1">
    <property type="nucleotide sequence ID" value="NM_138502.3"/>
</dbReference>
<dbReference type="SMR" id="Q8R431"/>
<dbReference type="FunCoup" id="Q8R431">
    <property type="interactions" value="218"/>
</dbReference>
<dbReference type="STRING" id="10116.ENSRNOP00000070667"/>
<dbReference type="BindingDB" id="Q8R431"/>
<dbReference type="ChEMBL" id="CHEMBL3321"/>
<dbReference type="GuidetoPHARMACOLOGY" id="1399"/>
<dbReference type="SwissLipids" id="SLP:000001427"/>
<dbReference type="ESTHER" id="ratno-MGLL">
    <property type="family name" value="Monoglyceridelipase_lysophospholip"/>
</dbReference>
<dbReference type="iPTMnet" id="Q8R431"/>
<dbReference type="PhosphoSitePlus" id="Q8R431"/>
<dbReference type="SwissPalm" id="Q8R431"/>
<dbReference type="PaxDb" id="10116-ENSRNOP00000030271"/>
<dbReference type="ABCD" id="Q8R431">
    <property type="antibodies" value="1 sequenced antibody"/>
</dbReference>
<dbReference type="Ensembl" id="ENSRNOT00000029125.7">
    <property type="protein sequence ID" value="ENSRNOP00000030271.5"/>
    <property type="gene ID" value="ENSRNOG00000014508.8"/>
</dbReference>
<dbReference type="GeneID" id="29254"/>
<dbReference type="KEGG" id="rno:29254"/>
<dbReference type="UCSC" id="RGD:71039">
    <property type="organism name" value="rat"/>
</dbReference>
<dbReference type="AGR" id="RGD:71039"/>
<dbReference type="CTD" id="11343"/>
<dbReference type="RGD" id="71039">
    <property type="gene designation" value="Mgll"/>
</dbReference>
<dbReference type="eggNOG" id="KOG1455">
    <property type="taxonomic scope" value="Eukaryota"/>
</dbReference>
<dbReference type="GeneTree" id="ENSGT00390000011364"/>
<dbReference type="HOGENOM" id="CLU_026209_7_1_1"/>
<dbReference type="InParanoid" id="Q8R431"/>
<dbReference type="PhylomeDB" id="Q8R431"/>
<dbReference type="BRENDA" id="3.1.1.23">
    <property type="organism ID" value="5301"/>
</dbReference>
<dbReference type="Reactome" id="R-RNO-1482883">
    <property type="pathway name" value="Acyl chain remodeling of DAG and TAG"/>
</dbReference>
<dbReference type="Reactome" id="R-RNO-426048">
    <property type="pathway name" value="Arachidonate production from DAG"/>
</dbReference>
<dbReference type="UniPathway" id="UPA00256"/>
<dbReference type="PRO" id="PR:Q8R431"/>
<dbReference type="Proteomes" id="UP000002494">
    <property type="component" value="Chromosome 4"/>
</dbReference>
<dbReference type="Bgee" id="ENSRNOG00000014508">
    <property type="expression patterns" value="Expressed in adult mammalian kidney and 19 other cell types or tissues"/>
</dbReference>
<dbReference type="ExpressionAtlas" id="Q8R431">
    <property type="expression patterns" value="baseline and differential"/>
</dbReference>
<dbReference type="GO" id="GO:0030424">
    <property type="term" value="C:axon"/>
    <property type="evidence" value="ECO:0000266"/>
    <property type="project" value="RGD"/>
</dbReference>
<dbReference type="GO" id="GO:0150053">
    <property type="term" value="C:cerebellar climbing fiber to Purkinje cell synapse"/>
    <property type="evidence" value="ECO:0000266"/>
    <property type="project" value="RGD"/>
</dbReference>
<dbReference type="GO" id="GO:0005829">
    <property type="term" value="C:cytosol"/>
    <property type="evidence" value="ECO:0000250"/>
    <property type="project" value="UniProtKB"/>
</dbReference>
<dbReference type="GO" id="GO:0005811">
    <property type="term" value="C:lipid droplet"/>
    <property type="evidence" value="ECO:0000304"/>
    <property type="project" value="Reactome"/>
</dbReference>
<dbReference type="GO" id="GO:0016020">
    <property type="term" value="C:membrane"/>
    <property type="evidence" value="ECO:0000250"/>
    <property type="project" value="UniProtKB"/>
</dbReference>
<dbReference type="GO" id="GO:0098688">
    <property type="term" value="C:parallel fiber to Purkinje cell synapse"/>
    <property type="evidence" value="ECO:0000266"/>
    <property type="project" value="RGD"/>
</dbReference>
<dbReference type="GO" id="GO:0098793">
    <property type="term" value="C:presynapse"/>
    <property type="evidence" value="ECO:0000314"/>
    <property type="project" value="SynGO"/>
</dbReference>
<dbReference type="GO" id="GO:0045202">
    <property type="term" value="C:synapse"/>
    <property type="evidence" value="ECO:0000266"/>
    <property type="project" value="RGD"/>
</dbReference>
<dbReference type="GO" id="GO:0043196">
    <property type="term" value="C:varicosity"/>
    <property type="evidence" value="ECO:0000266"/>
    <property type="project" value="RGD"/>
</dbReference>
<dbReference type="GO" id="GO:0016787">
    <property type="term" value="F:hydrolase activity"/>
    <property type="evidence" value="ECO:0000314"/>
    <property type="project" value="RGD"/>
</dbReference>
<dbReference type="GO" id="GO:0047372">
    <property type="term" value="F:monoacylglycerol lipase activity"/>
    <property type="evidence" value="ECO:0000314"/>
    <property type="project" value="UniProtKB"/>
</dbReference>
<dbReference type="GO" id="GO:0042803">
    <property type="term" value="F:protein homodimerization activity"/>
    <property type="evidence" value="ECO:0000266"/>
    <property type="project" value="RGD"/>
</dbReference>
<dbReference type="GO" id="GO:0046464">
    <property type="term" value="P:acylglycerol catabolic process"/>
    <property type="evidence" value="ECO:0000250"/>
    <property type="project" value="UniProtKB"/>
</dbReference>
<dbReference type="GO" id="GO:0019369">
    <property type="term" value="P:arachidonate metabolic process"/>
    <property type="evidence" value="ECO:0000250"/>
    <property type="project" value="UniProtKB"/>
</dbReference>
<dbReference type="GO" id="GO:0006633">
    <property type="term" value="P:fatty acid biosynthetic process"/>
    <property type="evidence" value="ECO:0007669"/>
    <property type="project" value="UniProtKB-KW"/>
</dbReference>
<dbReference type="GO" id="GO:0060292">
    <property type="term" value="P:long-term synaptic depression"/>
    <property type="evidence" value="ECO:0000266"/>
    <property type="project" value="RGD"/>
</dbReference>
<dbReference type="GO" id="GO:0052651">
    <property type="term" value="P:monoacylglycerol catabolic process"/>
    <property type="evidence" value="ECO:0000314"/>
    <property type="project" value="UniProtKB"/>
</dbReference>
<dbReference type="GO" id="GO:0045907">
    <property type="term" value="P:positive regulation of vasoconstriction"/>
    <property type="evidence" value="ECO:0000315"/>
    <property type="project" value="RGD"/>
</dbReference>
<dbReference type="GO" id="GO:0030516">
    <property type="term" value="P:regulation of axon extension"/>
    <property type="evidence" value="ECO:0000266"/>
    <property type="project" value="RGD"/>
</dbReference>
<dbReference type="GO" id="GO:2000124">
    <property type="term" value="P:regulation of endocannabinoid signaling pathway"/>
    <property type="evidence" value="ECO:0000266"/>
    <property type="project" value="RGD"/>
</dbReference>
<dbReference type="GO" id="GO:0050727">
    <property type="term" value="P:regulation of inflammatory response"/>
    <property type="evidence" value="ECO:0000250"/>
    <property type="project" value="UniProtKB"/>
</dbReference>
<dbReference type="GO" id="GO:0099178">
    <property type="term" value="P:regulation of retrograde trans-synaptic signaling by endocanabinoid"/>
    <property type="evidence" value="ECO:0000266"/>
    <property type="project" value="RGD"/>
</dbReference>
<dbReference type="GO" id="GO:0051930">
    <property type="term" value="P:regulation of sensory perception of pain"/>
    <property type="evidence" value="ECO:0000250"/>
    <property type="project" value="UniProtKB"/>
</dbReference>
<dbReference type="GO" id="GO:0009966">
    <property type="term" value="P:regulation of signal transduction"/>
    <property type="evidence" value="ECO:0000250"/>
    <property type="project" value="UniProtKB"/>
</dbReference>
<dbReference type="GO" id="GO:0019433">
    <property type="term" value="P:triglyceride catabolic process"/>
    <property type="evidence" value="ECO:0007669"/>
    <property type="project" value="UniProtKB-UniPathway"/>
</dbReference>
<dbReference type="FunFam" id="3.40.50.1820:FF:000066">
    <property type="entry name" value="Monoglyceride lipase"/>
    <property type="match status" value="1"/>
</dbReference>
<dbReference type="Gene3D" id="3.40.50.1820">
    <property type="entry name" value="alpha/beta hydrolase"/>
    <property type="match status" value="1"/>
</dbReference>
<dbReference type="InterPro" id="IPR000073">
    <property type="entry name" value="AB_hydrolase_1"/>
</dbReference>
<dbReference type="InterPro" id="IPR029058">
    <property type="entry name" value="AB_hydrolase_fold"/>
</dbReference>
<dbReference type="InterPro" id="IPR022742">
    <property type="entry name" value="Hydrolase_4"/>
</dbReference>
<dbReference type="InterPro" id="IPR051044">
    <property type="entry name" value="MAG_DAG_Lipase"/>
</dbReference>
<dbReference type="PANTHER" id="PTHR11614">
    <property type="entry name" value="PHOSPHOLIPASE-RELATED"/>
    <property type="match status" value="1"/>
</dbReference>
<dbReference type="Pfam" id="PF12146">
    <property type="entry name" value="Hydrolase_4"/>
    <property type="match status" value="1"/>
</dbReference>
<dbReference type="PRINTS" id="PR00111">
    <property type="entry name" value="ABHYDROLASE"/>
</dbReference>
<dbReference type="SUPFAM" id="SSF53474">
    <property type="entry name" value="alpha/beta-Hydrolases"/>
    <property type="match status" value="1"/>
</dbReference>
<dbReference type="PROSITE" id="PS00120">
    <property type="entry name" value="LIPASE_SER"/>
    <property type="match status" value="1"/>
</dbReference>
<comment type="function">
    <text evidence="2 4 5">Converts monoacylglycerides to free fatty acids and glycerol (PubMed:12136125). Hydrolyzes the endocannabinoid 2-arachidonoylglycerol, and thereby contributes to the regulation of endocannabinoid signaling, nociperception and perception of pain (PubMed:12136125, PubMed:17649977). Regulates the levels of fatty acids that serve as signaling molecules and promote cancer cell migration, invasion and tumor growth (By similarity).</text>
</comment>
<comment type="catalytic activity">
    <reaction evidence="5">
        <text>Hydrolyzes glycerol monoesters of long-chain fatty acids.</text>
        <dbReference type="EC" id="3.1.1.23"/>
    </reaction>
</comment>
<comment type="catalytic activity">
    <reaction evidence="3">
        <text>a 1-acylglycerol + H2O = glycerol + a fatty acid + H(+)</text>
        <dbReference type="Rhea" id="RHEA:34019"/>
        <dbReference type="ChEBI" id="CHEBI:15377"/>
        <dbReference type="ChEBI" id="CHEBI:15378"/>
        <dbReference type="ChEBI" id="CHEBI:17754"/>
        <dbReference type="ChEBI" id="CHEBI:28868"/>
        <dbReference type="ChEBI" id="CHEBI:35759"/>
    </reaction>
    <physiologicalReaction direction="left-to-right" evidence="3">
        <dbReference type="Rhea" id="RHEA:34020"/>
    </physiologicalReaction>
</comment>
<comment type="catalytic activity">
    <reaction evidence="5">
        <text>a 2-acylglycerol + H2O = glycerol + a fatty acid + H(+)</text>
        <dbReference type="Rhea" id="RHEA:44688"/>
        <dbReference type="ChEBI" id="CHEBI:15377"/>
        <dbReference type="ChEBI" id="CHEBI:15378"/>
        <dbReference type="ChEBI" id="CHEBI:17389"/>
        <dbReference type="ChEBI" id="CHEBI:17754"/>
        <dbReference type="ChEBI" id="CHEBI:28868"/>
    </reaction>
    <physiologicalReaction direction="left-to-right" evidence="5">
        <dbReference type="Rhea" id="RHEA:44689"/>
    </physiologicalReaction>
</comment>
<comment type="catalytic activity">
    <reaction evidence="3">
        <text>1-octanoylglycerol + H2O = octanoate + glycerol + H(+)</text>
        <dbReference type="Rhea" id="RHEA:44328"/>
        <dbReference type="ChEBI" id="CHEBI:15377"/>
        <dbReference type="ChEBI" id="CHEBI:15378"/>
        <dbReference type="ChEBI" id="CHEBI:17754"/>
        <dbReference type="ChEBI" id="CHEBI:25646"/>
        <dbReference type="ChEBI" id="CHEBI:85241"/>
    </reaction>
</comment>
<comment type="catalytic activity">
    <reaction evidence="5">
        <text>2-(5Z,8Z,11Z,14Z-eicosatetraenoyl)-glycerol + H2O = glycerol + (5Z,8Z,11Z,14Z)-eicosatetraenoate + H(+)</text>
        <dbReference type="Rhea" id="RHEA:26132"/>
        <dbReference type="ChEBI" id="CHEBI:15377"/>
        <dbReference type="ChEBI" id="CHEBI:15378"/>
        <dbReference type="ChEBI" id="CHEBI:17754"/>
        <dbReference type="ChEBI" id="CHEBI:32395"/>
        <dbReference type="ChEBI" id="CHEBI:52392"/>
    </reaction>
    <physiologicalReaction direction="left-to-right" evidence="5">
        <dbReference type="Rhea" id="RHEA:26133"/>
    </physiologicalReaction>
</comment>
<comment type="catalytic activity">
    <reaction evidence="3">
        <text>1-decanoylglycerol + H2O = decanoate + glycerol + H(+)</text>
        <dbReference type="Rhea" id="RHEA:44320"/>
        <dbReference type="ChEBI" id="CHEBI:15377"/>
        <dbReference type="ChEBI" id="CHEBI:15378"/>
        <dbReference type="ChEBI" id="CHEBI:17754"/>
        <dbReference type="ChEBI" id="CHEBI:27689"/>
        <dbReference type="ChEBI" id="CHEBI:75547"/>
    </reaction>
</comment>
<comment type="catalytic activity">
    <reaction evidence="3">
        <text>1-dodecanoylglycerol + H2O = dodecanoate + glycerol + H(+)</text>
        <dbReference type="Rhea" id="RHEA:44316"/>
        <dbReference type="ChEBI" id="CHEBI:15377"/>
        <dbReference type="ChEBI" id="CHEBI:15378"/>
        <dbReference type="ChEBI" id="CHEBI:17754"/>
        <dbReference type="ChEBI" id="CHEBI:18262"/>
        <dbReference type="ChEBI" id="CHEBI:75539"/>
    </reaction>
</comment>
<comment type="catalytic activity">
    <reaction evidence="3">
        <text>1-tetradecanoylglycerol + H2O = tetradecanoate + glycerol + H(+)</text>
        <dbReference type="Rhea" id="RHEA:44312"/>
        <dbReference type="ChEBI" id="CHEBI:15377"/>
        <dbReference type="ChEBI" id="CHEBI:15378"/>
        <dbReference type="ChEBI" id="CHEBI:17754"/>
        <dbReference type="ChEBI" id="CHEBI:30807"/>
        <dbReference type="ChEBI" id="CHEBI:75562"/>
    </reaction>
</comment>
<comment type="catalytic activity">
    <reaction evidence="3">
        <text>2-hexadecanoylglycerol + H2O = glycerol + hexadecanoate + H(+)</text>
        <dbReference type="Rhea" id="RHEA:39963"/>
        <dbReference type="ChEBI" id="CHEBI:7896"/>
        <dbReference type="ChEBI" id="CHEBI:15377"/>
        <dbReference type="ChEBI" id="CHEBI:15378"/>
        <dbReference type="ChEBI" id="CHEBI:17754"/>
        <dbReference type="ChEBI" id="CHEBI:75455"/>
    </reaction>
</comment>
<comment type="catalytic activity">
    <reaction evidence="3">
        <text>1-(9Z-octadecenoyl)-glycerol + H2O = glycerol + (9Z)-octadecenoate + H(+)</text>
        <dbReference type="Rhea" id="RHEA:38487"/>
        <dbReference type="ChEBI" id="CHEBI:15377"/>
        <dbReference type="ChEBI" id="CHEBI:15378"/>
        <dbReference type="ChEBI" id="CHEBI:17754"/>
        <dbReference type="ChEBI" id="CHEBI:30823"/>
        <dbReference type="ChEBI" id="CHEBI:75342"/>
    </reaction>
</comment>
<comment type="catalytic activity">
    <reaction evidence="3">
        <text>2-(9Z-octadecenoyl)-glycerol + H2O = glycerol + (9Z)-octadecenoate + H(+)</text>
        <dbReference type="Rhea" id="RHEA:38491"/>
        <dbReference type="ChEBI" id="CHEBI:15377"/>
        <dbReference type="ChEBI" id="CHEBI:15378"/>
        <dbReference type="ChEBI" id="CHEBI:17754"/>
        <dbReference type="ChEBI" id="CHEBI:30823"/>
        <dbReference type="ChEBI" id="CHEBI:73990"/>
    </reaction>
</comment>
<comment type="catalytic activity">
    <reaction evidence="3">
        <text>2-(9Z,12Z-octadecadienoyl)-glycerol + H2O = (9Z,12Z)-octadecadienoate + glycerol + H(+)</text>
        <dbReference type="Rhea" id="RHEA:44732"/>
        <dbReference type="ChEBI" id="CHEBI:15377"/>
        <dbReference type="ChEBI" id="CHEBI:15378"/>
        <dbReference type="ChEBI" id="CHEBI:17754"/>
        <dbReference type="ChEBI" id="CHEBI:30245"/>
        <dbReference type="ChEBI" id="CHEBI:75457"/>
    </reaction>
</comment>
<comment type="catalytic activity">
    <reaction evidence="3">
        <text>1-(5Z,8Z,11Z,14Z-eicosatetraenoyl)-glycerol + H2O = glycerol + (5Z,8Z,11Z,14Z)-eicosatetraenoate + H(+)</text>
        <dbReference type="Rhea" id="RHEA:44728"/>
        <dbReference type="ChEBI" id="CHEBI:15377"/>
        <dbReference type="ChEBI" id="CHEBI:15378"/>
        <dbReference type="ChEBI" id="CHEBI:17754"/>
        <dbReference type="ChEBI" id="CHEBI:32395"/>
        <dbReference type="ChEBI" id="CHEBI:75612"/>
    </reaction>
</comment>
<comment type="catalytic activity">
    <reaction evidence="3">
        <text>1-(9Z,12Z-octadecadienoyl)-glycerol + H2O = (9Z,12Z)-octadecadienoate + glycerol + H(+)</text>
        <dbReference type="Rhea" id="RHEA:48428"/>
        <dbReference type="ChEBI" id="CHEBI:15377"/>
        <dbReference type="ChEBI" id="CHEBI:15378"/>
        <dbReference type="ChEBI" id="CHEBI:17754"/>
        <dbReference type="ChEBI" id="CHEBI:30245"/>
        <dbReference type="ChEBI" id="CHEBI:75568"/>
    </reaction>
</comment>
<comment type="catalytic activity">
    <reaction evidence="2">
        <text>1-hexadecanoylglycerol + H2O = glycerol + hexadecanoate + H(+)</text>
        <dbReference type="Rhea" id="RHEA:39959"/>
        <dbReference type="ChEBI" id="CHEBI:7896"/>
        <dbReference type="ChEBI" id="CHEBI:15377"/>
        <dbReference type="ChEBI" id="CHEBI:15378"/>
        <dbReference type="ChEBI" id="CHEBI:17754"/>
        <dbReference type="ChEBI" id="CHEBI:69081"/>
    </reaction>
</comment>
<comment type="catalytic activity">
    <reaction evidence="3">
        <text>1-octadecanoylglycerol + H2O = octadecanoate + glycerol + H(+)</text>
        <dbReference type="Rhea" id="RHEA:38363"/>
        <dbReference type="ChEBI" id="CHEBI:15377"/>
        <dbReference type="ChEBI" id="CHEBI:15378"/>
        <dbReference type="ChEBI" id="CHEBI:17754"/>
        <dbReference type="ChEBI" id="CHEBI:25629"/>
        <dbReference type="ChEBI" id="CHEBI:75555"/>
    </reaction>
</comment>
<comment type="catalytic activity">
    <reaction evidence="3">
        <text>prostaglandin E2 1-glyceryl ester + H2O = prostaglandin E2 + glycerol + H(+)</text>
        <dbReference type="Rhea" id="RHEA:48296"/>
        <dbReference type="ChEBI" id="CHEBI:15377"/>
        <dbReference type="ChEBI" id="CHEBI:15378"/>
        <dbReference type="ChEBI" id="CHEBI:17754"/>
        <dbReference type="ChEBI" id="CHEBI:90230"/>
        <dbReference type="ChEBI" id="CHEBI:606564"/>
    </reaction>
</comment>
<comment type="catalytic activity">
    <reaction evidence="3">
        <text>prostaglandin D2-1-glycerol ester + H2O = prostaglandin D2 + glycerol + H(+)</text>
        <dbReference type="Rhea" id="RHEA:45412"/>
        <dbReference type="ChEBI" id="CHEBI:15377"/>
        <dbReference type="ChEBI" id="CHEBI:15378"/>
        <dbReference type="ChEBI" id="CHEBI:17754"/>
        <dbReference type="ChEBI" id="CHEBI:57406"/>
        <dbReference type="ChEBI" id="CHEBI:85232"/>
    </reaction>
</comment>
<comment type="catalytic activity">
    <reaction evidence="3">
        <text>2-glyceryl-15-deoxy-Delta(12,14)-prostaglandin J2 + H2O = 15-deoxy-Delta(12,14)-prostaglandin J2 + glycerol + H(+)</text>
        <dbReference type="Rhea" id="RHEA:45416"/>
        <dbReference type="ChEBI" id="CHEBI:15377"/>
        <dbReference type="ChEBI" id="CHEBI:15378"/>
        <dbReference type="ChEBI" id="CHEBI:17754"/>
        <dbReference type="ChEBI" id="CHEBI:85236"/>
        <dbReference type="ChEBI" id="CHEBI:85238"/>
    </reaction>
</comment>
<comment type="catalytic activity">
    <reaction evidence="3">
        <text>prostaglandin F2alpha 1-glyceryl ester + H2O = prostaglandin F2alpha + glycerol + H(+)</text>
        <dbReference type="Rhea" id="RHEA:48300"/>
        <dbReference type="ChEBI" id="CHEBI:15377"/>
        <dbReference type="ChEBI" id="CHEBI:15378"/>
        <dbReference type="ChEBI" id="CHEBI:17754"/>
        <dbReference type="ChEBI" id="CHEBI:57404"/>
        <dbReference type="ChEBI" id="CHEBI:90233"/>
    </reaction>
</comment>
<comment type="biophysicochemical properties">
    <kinetics>
        <KM evidence="5">10 uM for 2-arachidonoylglycerol (2-(5Z,8Z,11Z,14Z-eicosatetraenoyl)-glycerol)</KM>
        <text evidence="5">kcat is 21 min(-1) with 2-arachidonoylglycerol (2-(5Z,8Z,11Z,14Z-eicosatetraenoyl)-glycerol).</text>
    </kinetics>
</comment>
<comment type="pathway">
    <text evidence="2">Glycerolipid metabolism; triacylglycerol degradation.</text>
</comment>
<comment type="subunit">
    <text evidence="3">Homodimer.</text>
</comment>
<comment type="subcellular location">
    <subcellularLocation>
        <location evidence="2">Cytoplasm</location>
        <location evidence="2">Cytosol</location>
    </subcellularLocation>
    <subcellularLocation>
        <location evidence="2">Membrane</location>
        <topology evidence="2">Peripheral membrane protein</topology>
    </subcellularLocation>
</comment>
<comment type="tissue specificity">
    <text evidence="4 6">Ubiquitous. Highly expressed in adipose tissue, adrenal gland, ovary, heart, spleen, lung, skeletal muscle, kidney and testis. Highly expressed throughout the brain.</text>
</comment>
<comment type="miscellaneous">
    <text>Requires non-ionic detergent for solubilization.</text>
</comment>
<comment type="miscellaneous">
    <text evidence="1">Short-term inhibition causes analgesia, while long-term inhibition causes tolerance to endocannabinoids acting on brain cannabinoid receptor CNR1, and a reduction in brain cannabinoid receptor CNR1 activity.</text>
</comment>
<comment type="similarity">
    <text evidence="7">Belongs to the AB hydrolase superfamily. Monoacylglycerol lipase family.</text>
</comment>
<feature type="chain" id="PRO_0000191267" description="Monoglyceride lipase">
    <location>
        <begin position="1"/>
        <end position="303"/>
    </location>
</feature>
<feature type="active site" description="Nucleophile" evidence="2">
    <location>
        <position position="122"/>
    </location>
</feature>
<feature type="active site" description="Charge relay system" evidence="2">
    <location>
        <position position="239"/>
    </location>
</feature>
<feature type="active site" description="Charge relay system" evidence="2">
    <location>
        <position position="269"/>
    </location>
</feature>
<feature type="modified residue" description="Phosphothreonine" evidence="2">
    <location>
        <position position="10"/>
    </location>
</feature>
<feature type="modified residue" description="3'-nitrotyrosine" evidence="2">
    <location>
        <position position="58"/>
    </location>
</feature>
<feature type="modified residue" description="Phosphoserine" evidence="2">
    <location>
        <position position="189"/>
    </location>
</feature>